<evidence type="ECO:0000255" key="1">
    <source>
        <dbReference type="HAMAP-Rule" id="MF_00050"/>
    </source>
</evidence>
<dbReference type="EMBL" id="AM260522">
    <property type="protein sequence ID" value="CAJ99128.1"/>
    <property type="molecule type" value="Genomic_DNA"/>
</dbReference>
<dbReference type="RefSeq" id="WP_011577243.1">
    <property type="nucleotide sequence ID" value="NC_008229.1"/>
</dbReference>
<dbReference type="SMR" id="Q17YZ8"/>
<dbReference type="STRING" id="382638.Hac_0285"/>
<dbReference type="GeneID" id="31757800"/>
<dbReference type="KEGG" id="hac:Hac_0285"/>
<dbReference type="eggNOG" id="COG0264">
    <property type="taxonomic scope" value="Bacteria"/>
</dbReference>
<dbReference type="HOGENOM" id="CLU_047155_0_1_7"/>
<dbReference type="OrthoDB" id="9808348at2"/>
<dbReference type="BioCyc" id="HACI382638:HAC_RS01270-MONOMER"/>
<dbReference type="Proteomes" id="UP000000775">
    <property type="component" value="Chromosome"/>
</dbReference>
<dbReference type="GO" id="GO:0005737">
    <property type="term" value="C:cytoplasm"/>
    <property type="evidence" value="ECO:0007669"/>
    <property type="project" value="UniProtKB-SubCell"/>
</dbReference>
<dbReference type="GO" id="GO:0003746">
    <property type="term" value="F:translation elongation factor activity"/>
    <property type="evidence" value="ECO:0007669"/>
    <property type="project" value="UniProtKB-UniRule"/>
</dbReference>
<dbReference type="CDD" id="cd14275">
    <property type="entry name" value="UBA_EF-Ts"/>
    <property type="match status" value="1"/>
</dbReference>
<dbReference type="FunFam" id="1.10.286.20:FF:000004">
    <property type="entry name" value="Elongation factor Ts"/>
    <property type="match status" value="1"/>
</dbReference>
<dbReference type="FunFam" id="1.10.8.10:FF:000001">
    <property type="entry name" value="Elongation factor Ts"/>
    <property type="match status" value="1"/>
</dbReference>
<dbReference type="Gene3D" id="1.10.286.20">
    <property type="match status" value="2"/>
</dbReference>
<dbReference type="Gene3D" id="1.10.8.10">
    <property type="entry name" value="DNA helicase RuvA subunit, C-terminal domain"/>
    <property type="match status" value="1"/>
</dbReference>
<dbReference type="Gene3D" id="3.30.479.20">
    <property type="entry name" value="Elongation factor Ts, dimerisation domain"/>
    <property type="match status" value="3"/>
</dbReference>
<dbReference type="HAMAP" id="MF_00050">
    <property type="entry name" value="EF_Ts"/>
    <property type="match status" value="1"/>
</dbReference>
<dbReference type="InterPro" id="IPR036402">
    <property type="entry name" value="EF-Ts_dimer_sf"/>
</dbReference>
<dbReference type="InterPro" id="IPR001816">
    <property type="entry name" value="Transl_elong_EFTs/EF1B"/>
</dbReference>
<dbReference type="InterPro" id="IPR014039">
    <property type="entry name" value="Transl_elong_EFTs/EF1B_dimer"/>
</dbReference>
<dbReference type="InterPro" id="IPR018101">
    <property type="entry name" value="Transl_elong_Ts_CS"/>
</dbReference>
<dbReference type="InterPro" id="IPR009060">
    <property type="entry name" value="UBA-like_sf"/>
</dbReference>
<dbReference type="NCBIfam" id="TIGR00116">
    <property type="entry name" value="tsf"/>
    <property type="match status" value="2"/>
</dbReference>
<dbReference type="PANTHER" id="PTHR11741">
    <property type="entry name" value="ELONGATION FACTOR TS"/>
    <property type="match status" value="1"/>
</dbReference>
<dbReference type="PANTHER" id="PTHR11741:SF0">
    <property type="entry name" value="ELONGATION FACTOR TS, MITOCHONDRIAL"/>
    <property type="match status" value="1"/>
</dbReference>
<dbReference type="Pfam" id="PF00889">
    <property type="entry name" value="EF_TS"/>
    <property type="match status" value="1"/>
</dbReference>
<dbReference type="SUPFAM" id="SSF54713">
    <property type="entry name" value="Elongation factor Ts (EF-Ts), dimerisation domain"/>
    <property type="match status" value="1"/>
</dbReference>
<dbReference type="SUPFAM" id="SSF46934">
    <property type="entry name" value="UBA-like"/>
    <property type="match status" value="1"/>
</dbReference>
<dbReference type="PROSITE" id="PS01126">
    <property type="entry name" value="EF_TS_1"/>
    <property type="match status" value="1"/>
</dbReference>
<dbReference type="PROSITE" id="PS01127">
    <property type="entry name" value="EF_TS_2"/>
    <property type="match status" value="1"/>
</dbReference>
<proteinExistence type="inferred from homology"/>
<keyword id="KW-0963">Cytoplasm</keyword>
<keyword id="KW-0251">Elongation factor</keyword>
<keyword id="KW-0648">Protein biosynthesis</keyword>
<name>EFTS_HELAH</name>
<feature type="chain" id="PRO_1000006106" description="Elongation factor Ts">
    <location>
        <begin position="1"/>
        <end position="355"/>
    </location>
</feature>
<feature type="region of interest" description="Involved in Mg(2+) ion dislocation from EF-Tu" evidence="1">
    <location>
        <begin position="82"/>
        <end position="85"/>
    </location>
</feature>
<gene>
    <name evidence="1" type="primary">tsf</name>
    <name type="ordered locus">Hac_0285</name>
</gene>
<reference key="1">
    <citation type="journal article" date="2006" name="PLoS Genet.">
        <title>Who ate whom? Adaptive Helicobacter genomic changes that accompanied a host jump from early humans to large felines.</title>
        <authorList>
            <person name="Eppinger M."/>
            <person name="Baar C."/>
            <person name="Linz B."/>
            <person name="Raddatz G."/>
            <person name="Lanz C."/>
            <person name="Keller H."/>
            <person name="Morelli G."/>
            <person name="Gressmann H."/>
            <person name="Achtman M."/>
            <person name="Schuster S.C."/>
        </authorList>
    </citation>
    <scope>NUCLEOTIDE SEQUENCE [LARGE SCALE GENOMIC DNA]</scope>
    <source>
        <strain>Sheeba</strain>
    </source>
</reference>
<protein>
    <recommendedName>
        <fullName evidence="1">Elongation factor Ts</fullName>
        <shortName evidence="1">EF-Ts</shortName>
    </recommendedName>
</protein>
<comment type="function">
    <text evidence="1">Associates with the EF-Tu.GDP complex and induces the exchange of GDP to GTP. It remains bound to the aminoacyl-tRNA.EF-Tu.GTP complex up to the GTP hydrolysis stage on the ribosome.</text>
</comment>
<comment type="subcellular location">
    <subcellularLocation>
        <location evidence="1">Cytoplasm</location>
    </subcellularLocation>
</comment>
<comment type="similarity">
    <text evidence="1">Belongs to the EF-Ts family.</text>
</comment>
<organism>
    <name type="scientific">Helicobacter acinonychis (strain Sheeba)</name>
    <dbReference type="NCBI Taxonomy" id="382638"/>
    <lineage>
        <taxon>Bacteria</taxon>
        <taxon>Pseudomonadati</taxon>
        <taxon>Campylobacterota</taxon>
        <taxon>Epsilonproteobacteria</taxon>
        <taxon>Campylobacterales</taxon>
        <taxon>Helicobacteraceae</taxon>
        <taxon>Helicobacter</taxon>
    </lineage>
</organism>
<accession>Q17YZ8</accession>
<sequence length="355" mass="39930">MSEISAQLVKKLRDLTDVGMMDCKKALVEVAGDLQKAIDFLREKGLSKAAKKADRIASEGVVALEVAPDFKSAVMVEINSETDFVAKNEGFKELVKKTLETIKVHNAHTREELLKSSLDNKPFEEYLHSQIAVIGENILVRKIANSKAPSSHIINGYAHSNARVGVLITMKYNNEKNAPKAVELARNIAMHAAAMKPQVLDCKDFSLDFVKKETLVLIAEIEKDNEEAKRLGKPLKNIPTFGSRIELSDEVLAHQKKVFEDELKEQGKPEKIWDKIVLGKMERFIADNTLIDQRLTLLGQFYVMDDKKTIAQVIADYSKELNDTLEITEYVRFELGEGIEKKAENFAEEVALQMK</sequence>